<keyword id="KW-0067">ATP-binding</keyword>
<keyword id="KW-0967">Endosome</keyword>
<keyword id="KW-0333">Golgi apparatus</keyword>
<keyword id="KW-0445">Lipid transport</keyword>
<keyword id="KW-0460">Magnesium</keyword>
<keyword id="KW-0472">Membrane</keyword>
<keyword id="KW-0479">Metal-binding</keyword>
<keyword id="KW-0547">Nucleotide-binding</keyword>
<keyword id="KW-0597">Phosphoprotein</keyword>
<keyword id="KW-1185">Reference proteome</keyword>
<keyword id="KW-1278">Translocase</keyword>
<keyword id="KW-0812">Transmembrane</keyword>
<keyword id="KW-1133">Transmembrane helix</keyword>
<keyword id="KW-0813">Transport</keyword>
<comment type="function">
    <text evidence="5">Flippase that catalyzes the hydrolysis of ATP coupled to the transport of lysophosphatidylserine, phosphatidylethanolamine, and phosphatidylserine from the lumenal to the cytosolic leaflet of the Golgi apparatus membrane and ensures the maintenance of asymmetric distribution of phospholipids.</text>
</comment>
<comment type="catalytic activity">
    <reaction evidence="5">
        <text>ATP + H2O + phospholipidSide 1 = ADP + phosphate + phospholipidSide 2.</text>
        <dbReference type="EC" id="7.6.2.1"/>
    </reaction>
</comment>
<comment type="catalytic activity">
    <reaction evidence="5">
        <text>a 1,2-diacyl-sn-glycero-3-phospho-L-serine(out) + ATP + H2O = a 1,2-diacyl-sn-glycero-3-phospho-L-serine(in) + ADP + phosphate + H(+)</text>
        <dbReference type="Rhea" id="RHEA:38567"/>
        <dbReference type="ChEBI" id="CHEBI:15377"/>
        <dbReference type="ChEBI" id="CHEBI:15378"/>
        <dbReference type="ChEBI" id="CHEBI:30616"/>
        <dbReference type="ChEBI" id="CHEBI:43474"/>
        <dbReference type="ChEBI" id="CHEBI:57262"/>
        <dbReference type="ChEBI" id="CHEBI:456216"/>
    </reaction>
    <physiologicalReaction direction="left-to-right" evidence="5">
        <dbReference type="Rhea" id="RHEA:38568"/>
    </physiologicalReaction>
</comment>
<comment type="catalytic activity">
    <reaction evidence="5">
        <text>a 1,2-diacyl-sn-glycero-3-phosphoethanolamine(out) + ATP + H2O = a 1,2-diacyl-sn-glycero-3-phosphoethanolamine(in) + ADP + phosphate + H(+)</text>
        <dbReference type="Rhea" id="RHEA:66132"/>
        <dbReference type="ChEBI" id="CHEBI:15377"/>
        <dbReference type="ChEBI" id="CHEBI:15378"/>
        <dbReference type="ChEBI" id="CHEBI:30616"/>
        <dbReference type="ChEBI" id="CHEBI:43474"/>
        <dbReference type="ChEBI" id="CHEBI:64612"/>
        <dbReference type="ChEBI" id="CHEBI:456216"/>
    </reaction>
    <physiologicalReaction direction="left-to-right" evidence="5">
        <dbReference type="Rhea" id="RHEA:66133"/>
    </physiologicalReaction>
</comment>
<comment type="cofactor">
    <cofactor evidence="5">
        <name>Mg(2+)</name>
        <dbReference type="ChEBI" id="CHEBI:18420"/>
    </cofactor>
</comment>
<comment type="subunit">
    <text evidence="5">Functions without a CDC50/LEM3 family accessory subunit.</text>
</comment>
<comment type="subcellular location">
    <subcellularLocation>
        <location evidence="5">Endosome membrane</location>
        <topology evidence="8">Multi-pass membrane protein</topology>
    </subcellularLocation>
    <subcellularLocation>
        <location evidence="9">Golgi apparatus membrane</location>
        <topology evidence="8">Multi-pass membrane protein</topology>
    </subcellularLocation>
</comment>
<comment type="similarity">
    <text evidence="10">Belongs to the cation transport ATPase (P-type) (TC 3.A.3) family. Type IV subfamily.</text>
</comment>
<protein>
    <recommendedName>
        <fullName evidence="10">Phospholipid-transporting ATPase neo1</fullName>
        <ecNumber evidence="5">7.6.2.1</ecNumber>
    </recommendedName>
</protein>
<feature type="chain" id="PRO_0000046319" description="Phospholipid-transporting ATPase neo1">
    <location>
        <begin position="1"/>
        <end position="1033"/>
    </location>
</feature>
<feature type="transmembrane region" description="Helical" evidence="8">
    <location>
        <begin position="133"/>
        <end position="153"/>
    </location>
</feature>
<feature type="transmembrane region" description="Helical" evidence="8">
    <location>
        <begin position="274"/>
        <end position="294"/>
    </location>
</feature>
<feature type="transmembrane region" description="Helical" evidence="8">
    <location>
        <begin position="317"/>
        <end position="337"/>
    </location>
</feature>
<feature type="transmembrane region" description="Helical" evidence="8">
    <location>
        <begin position="344"/>
        <end position="364"/>
    </location>
</feature>
<feature type="transmembrane region" description="Helical" evidence="8">
    <location>
        <begin position="768"/>
        <end position="788"/>
    </location>
</feature>
<feature type="transmembrane region" description="Helical" evidence="8">
    <location>
        <begin position="843"/>
        <end position="863"/>
    </location>
</feature>
<feature type="transmembrane region" description="Helical" evidence="8">
    <location>
        <begin position="913"/>
        <end position="933"/>
    </location>
</feature>
<feature type="transmembrane region" description="Helical" evidence="8">
    <location>
        <begin position="939"/>
        <end position="959"/>
    </location>
</feature>
<feature type="transmembrane region" description="Helical" evidence="8">
    <location>
        <begin position="965"/>
        <end position="985"/>
    </location>
</feature>
<feature type="transmembrane region" description="Helical" evidence="8">
    <location>
        <begin position="992"/>
        <end position="1012"/>
    </location>
</feature>
<feature type="active site" description="4-aspartylphosphate intermediate" evidence="7">
    <location>
        <position position="408"/>
    </location>
</feature>
<feature type="binding site" evidence="7">
    <location>
        <position position="408"/>
    </location>
    <ligand>
        <name>ATP</name>
        <dbReference type="ChEBI" id="CHEBI:30616"/>
    </ligand>
</feature>
<feature type="binding site" evidence="7">
    <location>
        <position position="408"/>
    </location>
    <ligand>
        <name>Mg(2+)</name>
        <dbReference type="ChEBI" id="CHEBI:18420"/>
    </ligand>
</feature>
<feature type="binding site" evidence="7">
    <location>
        <position position="409"/>
    </location>
    <ligand>
        <name>ATP</name>
        <dbReference type="ChEBI" id="CHEBI:30616"/>
    </ligand>
</feature>
<feature type="binding site" evidence="4">
    <location>
        <position position="410"/>
    </location>
    <ligand>
        <name>ATP</name>
        <dbReference type="ChEBI" id="CHEBI:30616"/>
    </ligand>
</feature>
<feature type="binding site" evidence="7">
    <location>
        <position position="410"/>
    </location>
    <ligand>
        <name>Mg(2+)</name>
        <dbReference type="ChEBI" id="CHEBI:18420"/>
    </ligand>
</feature>
<feature type="binding site" evidence="2">
    <location>
        <position position="491"/>
    </location>
    <ligand>
        <name>ATP</name>
        <dbReference type="ChEBI" id="CHEBI:30616"/>
    </ligand>
</feature>
<feature type="binding site" evidence="7">
    <location>
        <position position="528"/>
    </location>
    <ligand>
        <name>ATP</name>
        <dbReference type="ChEBI" id="CHEBI:30616"/>
    </ligand>
</feature>
<feature type="binding site" evidence="3">
    <location>
        <position position="530"/>
    </location>
    <ligand>
        <name>ATP</name>
        <dbReference type="ChEBI" id="CHEBI:30616"/>
    </ligand>
</feature>
<feature type="binding site" evidence="4">
    <location>
        <position position="533"/>
    </location>
    <ligand>
        <name>ATP</name>
        <dbReference type="ChEBI" id="CHEBI:30616"/>
    </ligand>
</feature>
<feature type="binding site" evidence="2">
    <location>
        <position position="551"/>
    </location>
    <ligand>
        <name>ATP</name>
        <dbReference type="ChEBI" id="CHEBI:30616"/>
    </ligand>
</feature>
<feature type="binding site" evidence="2">
    <location>
        <position position="580"/>
    </location>
    <ligand>
        <name>ATP</name>
        <dbReference type="ChEBI" id="CHEBI:30616"/>
    </ligand>
</feature>
<feature type="binding site" evidence="4">
    <location>
        <position position="581"/>
    </location>
    <ligand>
        <name>ATP</name>
        <dbReference type="ChEBI" id="CHEBI:30616"/>
    </ligand>
</feature>
<feature type="binding site" evidence="2">
    <location>
        <position position="662"/>
    </location>
    <ligand>
        <name>ATP</name>
        <dbReference type="ChEBI" id="CHEBI:30616"/>
    </ligand>
</feature>
<feature type="binding site" evidence="2">
    <location>
        <position position="663"/>
    </location>
    <ligand>
        <name>ATP</name>
        <dbReference type="ChEBI" id="CHEBI:30616"/>
    </ligand>
</feature>
<feature type="binding site" evidence="2">
    <location>
        <position position="664"/>
    </location>
    <ligand>
        <name>ATP</name>
        <dbReference type="ChEBI" id="CHEBI:30616"/>
    </ligand>
</feature>
<feature type="binding site" evidence="2">
    <location>
        <position position="744"/>
    </location>
    <ligand>
        <name>ATP</name>
        <dbReference type="ChEBI" id="CHEBI:30616"/>
    </ligand>
</feature>
<feature type="binding site" evidence="2">
    <location>
        <position position="750"/>
    </location>
    <ligand>
        <name>ATP</name>
        <dbReference type="ChEBI" id="CHEBI:30616"/>
    </ligand>
</feature>
<feature type="binding site" evidence="7">
    <location>
        <position position="770"/>
    </location>
    <ligand>
        <name>Mg(2+)</name>
        <dbReference type="ChEBI" id="CHEBI:18420"/>
    </ligand>
</feature>
<feature type="binding site" evidence="7">
    <location>
        <position position="773"/>
    </location>
    <ligand>
        <name>ATP</name>
        <dbReference type="ChEBI" id="CHEBI:30616"/>
    </ligand>
</feature>
<feature type="binding site" evidence="2">
    <location>
        <position position="774"/>
    </location>
    <ligand>
        <name>ATP</name>
        <dbReference type="ChEBI" id="CHEBI:30616"/>
    </ligand>
</feature>
<feature type="binding site" evidence="6">
    <location>
        <position position="774"/>
    </location>
    <ligand>
        <name>Mg(2+)</name>
        <dbReference type="ChEBI" id="CHEBI:18420"/>
    </ligand>
</feature>
<feature type="site" description="Involved in the release of the transported lipid into the cytosolic leaflet" evidence="1">
    <location>
        <position position="362"/>
    </location>
</feature>
<gene>
    <name evidence="11" type="primary">neo1</name>
    <name evidence="11" type="ORF">SPAC6C3.06c</name>
</gene>
<evidence type="ECO:0000250" key="1">
    <source>
        <dbReference type="UniProtKB" id="C7EXK4"/>
    </source>
</evidence>
<evidence type="ECO:0000250" key="2">
    <source>
        <dbReference type="UniProtKB" id="P04191"/>
    </source>
</evidence>
<evidence type="ECO:0000250" key="3">
    <source>
        <dbReference type="UniProtKB" id="P32660"/>
    </source>
</evidence>
<evidence type="ECO:0000250" key="4">
    <source>
        <dbReference type="UniProtKB" id="P39524"/>
    </source>
</evidence>
<evidence type="ECO:0000250" key="5">
    <source>
        <dbReference type="UniProtKB" id="P40527"/>
    </source>
</evidence>
<evidence type="ECO:0000250" key="6">
    <source>
        <dbReference type="UniProtKB" id="Q8NB49"/>
    </source>
</evidence>
<evidence type="ECO:0000250" key="7">
    <source>
        <dbReference type="UniProtKB" id="Q9Y2Q0"/>
    </source>
</evidence>
<evidence type="ECO:0000255" key="8"/>
<evidence type="ECO:0000269" key="9">
    <source>
    </source>
</evidence>
<evidence type="ECO:0000305" key="10"/>
<evidence type="ECO:0000312" key="11">
    <source>
        <dbReference type="PomBase" id="SPAC6C3.06c"/>
    </source>
</evidence>
<organism>
    <name type="scientific">Schizosaccharomyces pombe (strain 972 / ATCC 24843)</name>
    <name type="common">Fission yeast</name>
    <dbReference type="NCBI Taxonomy" id="284812"/>
    <lineage>
        <taxon>Eukaryota</taxon>
        <taxon>Fungi</taxon>
        <taxon>Dikarya</taxon>
        <taxon>Ascomycota</taxon>
        <taxon>Taphrinomycotina</taxon>
        <taxon>Schizosaccharomycetes</taxon>
        <taxon>Schizosaccharomycetales</taxon>
        <taxon>Schizosaccharomycetaceae</taxon>
        <taxon>Schizosaccharomyces</taxon>
    </lineage>
</organism>
<proteinExistence type="inferred from homology"/>
<sequence>MDSRLNRIQSKMKLWIKDKNLSNPSIPLKVLNKSFRSSRQSSVSNGHGLYSLDRDETESLMSSHEASNAGISLDSSFRVIQVGQPEPQYGNNAVTNTKYDLFTFLPKCLYEQFRYFYNMYFLLVSLSQLIPPLKIGYLSTYIAPLIFVLLITLTKEAVDDLKRRRRDSYANNEIYTVNDSPCAAQNIQAGDVVYIAKDQRIPADMILLETTVGNEAFIRTDQLDGETDWKLRIPCSNQHTEGIVHADAPIKSVHHFYGTFTLNNQKRPISVDHTLWANTVLASDGVYGVVVYTGKDTRQSMNSSKAKTKVGLLEKEINFYSKILCTFVLVLSIGLTFSHGIKTDWYISVFRYLILFSSIIPINLRVNLDLAKIVHSKNTESDPNLPGVVVRSSNIPEELGRIEYVLTDKTGTLTQNEMEMKKLHVGTMGFSAESMDVVQACIQNYSTPIPLSEDSKTLVRNLVLALSLCHNVTPSKGHDGVVSYQAASPDEVAIVKWTSTLGLVLTNRTRDAITLNNNVYKILNIFPFKSETKRMGIIVQSPDEKITFYLKGADSIMQNFVKPSFWLEEECGNLAREGLRTLVVAKKDLSAEEYSAFSLAHSDASLSFSNSRDKKMEEIVSRYLENDMDLLGLTGVEDKLQKDVKITLELLRNAGIHVWMLTGDKVETARCIAISSRLVSRGQYIHTINQLSSREEAHNHLLTLRNKPDSCLIIDGESMEFCIGYLQNEFIDIVSDLSSVVICRCTPTQKANMTRLIQEKKQASVCCIGDGGNDVGMIQVANVGIGIVGKEGQQASLAADYSVKEFSHVSRLLLWHGRISYKQTSKLAMFVIHRGLLISVCQVVYSVISAFEPIALFQGLLLVGYSTMYTMLPVFSIVYDRDVSEKLVFLFPELYKEMREQKCFSYKNFISCVLISVYQGLIIQLFTFYLIGFEEEGKMLAVCFSCLIFNELIMVALQINTWEQTIVMSELLTLMMYILSVPFLTNYFELKFLLGLKFYWVSALILFISLLPVWCGKALKRKLKPSSYAKLQR</sequence>
<dbReference type="EC" id="7.6.2.1" evidence="5"/>
<dbReference type="EMBL" id="CU329670">
    <property type="protein sequence ID" value="CAA93618.1"/>
    <property type="molecule type" value="Genomic_DNA"/>
</dbReference>
<dbReference type="PIR" id="T39030">
    <property type="entry name" value="T39030"/>
</dbReference>
<dbReference type="RefSeq" id="NP_593720.1">
    <property type="nucleotide sequence ID" value="NM_001019151.2"/>
</dbReference>
<dbReference type="SMR" id="Q10309"/>
<dbReference type="BioGRID" id="279357">
    <property type="interactions" value="18"/>
</dbReference>
<dbReference type="FunCoup" id="Q10309">
    <property type="interactions" value="218"/>
</dbReference>
<dbReference type="STRING" id="284812.Q10309"/>
<dbReference type="iPTMnet" id="Q10309"/>
<dbReference type="SwissPalm" id="Q10309"/>
<dbReference type="PaxDb" id="4896-SPAC6C3.06c.1"/>
<dbReference type="EnsemblFungi" id="SPAC6C3.06c.1">
    <property type="protein sequence ID" value="SPAC6C3.06c.1:pep"/>
    <property type="gene ID" value="SPAC6C3.06c"/>
</dbReference>
<dbReference type="GeneID" id="2542915"/>
<dbReference type="KEGG" id="spo:2542915"/>
<dbReference type="PomBase" id="SPAC6C3.06c">
    <property type="gene designation" value="neo1"/>
</dbReference>
<dbReference type="VEuPathDB" id="FungiDB:SPAC6C3.06c"/>
<dbReference type="eggNOG" id="KOG0210">
    <property type="taxonomic scope" value="Eukaryota"/>
</dbReference>
<dbReference type="HOGENOM" id="CLU_000846_3_1_1"/>
<dbReference type="InParanoid" id="Q10309"/>
<dbReference type="OMA" id="IAITTWH"/>
<dbReference type="PhylomeDB" id="Q10309"/>
<dbReference type="Reactome" id="R-SPO-936837">
    <property type="pathway name" value="Ion transport by P-type ATPases"/>
</dbReference>
<dbReference type="PRO" id="PR:Q10309"/>
<dbReference type="Proteomes" id="UP000002485">
    <property type="component" value="Chromosome I"/>
</dbReference>
<dbReference type="GO" id="GO:0005768">
    <property type="term" value="C:endosome"/>
    <property type="evidence" value="ECO:0000318"/>
    <property type="project" value="GO_Central"/>
</dbReference>
<dbReference type="GO" id="GO:0010008">
    <property type="term" value="C:endosome membrane"/>
    <property type="evidence" value="ECO:0007669"/>
    <property type="project" value="UniProtKB-SubCell"/>
</dbReference>
<dbReference type="GO" id="GO:0005794">
    <property type="term" value="C:Golgi apparatus"/>
    <property type="evidence" value="ECO:0007005"/>
    <property type="project" value="PomBase"/>
</dbReference>
<dbReference type="GO" id="GO:0000139">
    <property type="term" value="C:Golgi membrane"/>
    <property type="evidence" value="ECO:0000266"/>
    <property type="project" value="PomBase"/>
</dbReference>
<dbReference type="GO" id="GO:0005886">
    <property type="term" value="C:plasma membrane"/>
    <property type="evidence" value="ECO:0000318"/>
    <property type="project" value="GO_Central"/>
</dbReference>
<dbReference type="GO" id="GO:0005802">
    <property type="term" value="C:trans-Golgi network"/>
    <property type="evidence" value="ECO:0000318"/>
    <property type="project" value="GO_Central"/>
</dbReference>
<dbReference type="GO" id="GO:0005524">
    <property type="term" value="F:ATP binding"/>
    <property type="evidence" value="ECO:0007669"/>
    <property type="project" value="UniProtKB-KW"/>
</dbReference>
<dbReference type="GO" id="GO:0016887">
    <property type="term" value="F:ATP hydrolysis activity"/>
    <property type="evidence" value="ECO:0007669"/>
    <property type="project" value="InterPro"/>
</dbReference>
<dbReference type="GO" id="GO:0140326">
    <property type="term" value="F:ATPase-coupled intramembrane lipid transporter activity"/>
    <property type="evidence" value="ECO:0000318"/>
    <property type="project" value="GO_Central"/>
</dbReference>
<dbReference type="GO" id="GO:0180013">
    <property type="term" value="F:lysophosphatidylserine flippase activity"/>
    <property type="evidence" value="ECO:0000250"/>
    <property type="project" value="UniProtKB"/>
</dbReference>
<dbReference type="GO" id="GO:0000287">
    <property type="term" value="F:magnesium ion binding"/>
    <property type="evidence" value="ECO:0007669"/>
    <property type="project" value="InterPro"/>
</dbReference>
<dbReference type="GO" id="GO:0090555">
    <property type="term" value="F:phosphatidylethanolamine flippase activity"/>
    <property type="evidence" value="ECO:0000250"/>
    <property type="project" value="UniProtKB"/>
</dbReference>
<dbReference type="GO" id="GO:0140346">
    <property type="term" value="F:phosphatidylserine flippase activity"/>
    <property type="evidence" value="ECO:0000250"/>
    <property type="project" value="UniProtKB"/>
</dbReference>
<dbReference type="GO" id="GO:0090556">
    <property type="term" value="F:phosphatidylserine floppase activity"/>
    <property type="evidence" value="ECO:0007669"/>
    <property type="project" value="RHEA"/>
</dbReference>
<dbReference type="GO" id="GO:0006897">
    <property type="term" value="P:endocytosis"/>
    <property type="evidence" value="ECO:0000318"/>
    <property type="project" value="GO_Central"/>
</dbReference>
<dbReference type="GO" id="GO:0045332">
    <property type="term" value="P:phospholipid translocation"/>
    <property type="evidence" value="ECO:0000250"/>
    <property type="project" value="UniProtKB"/>
</dbReference>
<dbReference type="GO" id="GO:0006890">
    <property type="term" value="P:retrograde vesicle-mediated transport, Golgi to endoplasmic reticulum"/>
    <property type="evidence" value="ECO:0000318"/>
    <property type="project" value="GO_Central"/>
</dbReference>
<dbReference type="CDD" id="cd07541">
    <property type="entry name" value="P-type_ATPase_APLT_Neo1-like"/>
    <property type="match status" value="1"/>
</dbReference>
<dbReference type="FunFam" id="3.40.50.1000:FF:000009">
    <property type="entry name" value="Phospholipid-transporting ATPase"/>
    <property type="match status" value="1"/>
</dbReference>
<dbReference type="Gene3D" id="3.40.1110.10">
    <property type="entry name" value="Calcium-transporting ATPase, cytoplasmic domain N"/>
    <property type="match status" value="1"/>
</dbReference>
<dbReference type="Gene3D" id="2.70.150.10">
    <property type="entry name" value="Calcium-transporting ATPase, cytoplasmic transduction domain A"/>
    <property type="match status" value="1"/>
</dbReference>
<dbReference type="Gene3D" id="3.40.50.1000">
    <property type="entry name" value="HAD superfamily/HAD-like"/>
    <property type="match status" value="1"/>
</dbReference>
<dbReference type="InterPro" id="IPR023299">
    <property type="entry name" value="ATPase_P-typ_cyto_dom_N"/>
</dbReference>
<dbReference type="InterPro" id="IPR018303">
    <property type="entry name" value="ATPase_P-typ_P_site"/>
</dbReference>
<dbReference type="InterPro" id="IPR023298">
    <property type="entry name" value="ATPase_P-typ_TM_dom_sf"/>
</dbReference>
<dbReference type="InterPro" id="IPR008250">
    <property type="entry name" value="ATPase_P-typ_transduc_dom_A_sf"/>
</dbReference>
<dbReference type="InterPro" id="IPR036412">
    <property type="entry name" value="HAD-like_sf"/>
</dbReference>
<dbReference type="InterPro" id="IPR023214">
    <property type="entry name" value="HAD_sf"/>
</dbReference>
<dbReference type="InterPro" id="IPR006539">
    <property type="entry name" value="P-type_ATPase_IV"/>
</dbReference>
<dbReference type="InterPro" id="IPR032631">
    <property type="entry name" value="P-type_ATPase_N"/>
</dbReference>
<dbReference type="InterPro" id="IPR001757">
    <property type="entry name" value="P_typ_ATPase"/>
</dbReference>
<dbReference type="InterPro" id="IPR032630">
    <property type="entry name" value="P_typ_ATPase_c"/>
</dbReference>
<dbReference type="InterPro" id="IPR044492">
    <property type="entry name" value="P_typ_ATPase_HD_dom"/>
</dbReference>
<dbReference type="NCBIfam" id="TIGR01652">
    <property type="entry name" value="ATPase-Plipid"/>
    <property type="match status" value="1"/>
</dbReference>
<dbReference type="NCBIfam" id="TIGR01494">
    <property type="entry name" value="ATPase_P-type"/>
    <property type="match status" value="2"/>
</dbReference>
<dbReference type="PANTHER" id="PTHR24092:SF5">
    <property type="entry name" value="PHOSPHOLIPID-TRANSPORTING ATPASE"/>
    <property type="match status" value="1"/>
</dbReference>
<dbReference type="PANTHER" id="PTHR24092">
    <property type="entry name" value="PROBABLE PHOSPHOLIPID-TRANSPORTING ATPASE"/>
    <property type="match status" value="1"/>
</dbReference>
<dbReference type="Pfam" id="PF13246">
    <property type="entry name" value="Cation_ATPase"/>
    <property type="match status" value="1"/>
</dbReference>
<dbReference type="Pfam" id="PF00122">
    <property type="entry name" value="E1-E2_ATPase"/>
    <property type="match status" value="1"/>
</dbReference>
<dbReference type="Pfam" id="PF16212">
    <property type="entry name" value="PhoLip_ATPase_C"/>
    <property type="match status" value="1"/>
</dbReference>
<dbReference type="Pfam" id="PF16209">
    <property type="entry name" value="PhoLip_ATPase_N"/>
    <property type="match status" value="1"/>
</dbReference>
<dbReference type="PRINTS" id="PR00119">
    <property type="entry name" value="CATATPASE"/>
</dbReference>
<dbReference type="SFLD" id="SFLDS00003">
    <property type="entry name" value="Haloacid_Dehalogenase"/>
    <property type="match status" value="1"/>
</dbReference>
<dbReference type="SFLD" id="SFLDF00027">
    <property type="entry name" value="p-type_atpase"/>
    <property type="match status" value="1"/>
</dbReference>
<dbReference type="SUPFAM" id="SSF81653">
    <property type="entry name" value="Calcium ATPase, transduction domain A"/>
    <property type="match status" value="1"/>
</dbReference>
<dbReference type="SUPFAM" id="SSF81665">
    <property type="entry name" value="Calcium ATPase, transmembrane domain M"/>
    <property type="match status" value="1"/>
</dbReference>
<dbReference type="SUPFAM" id="SSF56784">
    <property type="entry name" value="HAD-like"/>
    <property type="match status" value="1"/>
</dbReference>
<dbReference type="SUPFAM" id="SSF81660">
    <property type="entry name" value="Metal cation-transporting ATPase, ATP-binding domain N"/>
    <property type="match status" value="1"/>
</dbReference>
<dbReference type="PROSITE" id="PS00154">
    <property type="entry name" value="ATPASE_E1_E2"/>
    <property type="match status" value="1"/>
</dbReference>
<name>ATC7_SCHPO</name>
<reference key="1">
    <citation type="journal article" date="2002" name="Nature">
        <title>The genome sequence of Schizosaccharomyces pombe.</title>
        <authorList>
            <person name="Wood V."/>
            <person name="Gwilliam R."/>
            <person name="Rajandream M.A."/>
            <person name="Lyne M.H."/>
            <person name="Lyne R."/>
            <person name="Stewart A."/>
            <person name="Sgouros J.G."/>
            <person name="Peat N."/>
            <person name="Hayles J."/>
            <person name="Baker S.G."/>
            <person name="Basham D."/>
            <person name="Bowman S."/>
            <person name="Brooks K."/>
            <person name="Brown D."/>
            <person name="Brown S."/>
            <person name="Chillingworth T."/>
            <person name="Churcher C.M."/>
            <person name="Collins M."/>
            <person name="Connor R."/>
            <person name="Cronin A."/>
            <person name="Davis P."/>
            <person name="Feltwell T."/>
            <person name="Fraser A."/>
            <person name="Gentles S."/>
            <person name="Goble A."/>
            <person name="Hamlin N."/>
            <person name="Harris D.E."/>
            <person name="Hidalgo J."/>
            <person name="Hodgson G."/>
            <person name="Holroyd S."/>
            <person name="Hornsby T."/>
            <person name="Howarth S."/>
            <person name="Huckle E.J."/>
            <person name="Hunt S."/>
            <person name="Jagels K."/>
            <person name="James K.D."/>
            <person name="Jones L."/>
            <person name="Jones M."/>
            <person name="Leather S."/>
            <person name="McDonald S."/>
            <person name="McLean J."/>
            <person name="Mooney P."/>
            <person name="Moule S."/>
            <person name="Mungall K.L."/>
            <person name="Murphy L.D."/>
            <person name="Niblett D."/>
            <person name="Odell C."/>
            <person name="Oliver K."/>
            <person name="O'Neil S."/>
            <person name="Pearson D."/>
            <person name="Quail M.A."/>
            <person name="Rabbinowitsch E."/>
            <person name="Rutherford K.M."/>
            <person name="Rutter S."/>
            <person name="Saunders D."/>
            <person name="Seeger K."/>
            <person name="Sharp S."/>
            <person name="Skelton J."/>
            <person name="Simmonds M.N."/>
            <person name="Squares R."/>
            <person name="Squares S."/>
            <person name="Stevens K."/>
            <person name="Taylor K."/>
            <person name="Taylor R.G."/>
            <person name="Tivey A."/>
            <person name="Walsh S.V."/>
            <person name="Warren T."/>
            <person name="Whitehead S."/>
            <person name="Woodward J.R."/>
            <person name="Volckaert G."/>
            <person name="Aert R."/>
            <person name="Robben J."/>
            <person name="Grymonprez B."/>
            <person name="Weltjens I."/>
            <person name="Vanstreels E."/>
            <person name="Rieger M."/>
            <person name="Schaefer M."/>
            <person name="Mueller-Auer S."/>
            <person name="Gabel C."/>
            <person name="Fuchs M."/>
            <person name="Duesterhoeft A."/>
            <person name="Fritzc C."/>
            <person name="Holzer E."/>
            <person name="Moestl D."/>
            <person name="Hilbert H."/>
            <person name="Borzym K."/>
            <person name="Langer I."/>
            <person name="Beck A."/>
            <person name="Lehrach H."/>
            <person name="Reinhardt R."/>
            <person name="Pohl T.M."/>
            <person name="Eger P."/>
            <person name="Zimmermann W."/>
            <person name="Wedler H."/>
            <person name="Wambutt R."/>
            <person name="Purnelle B."/>
            <person name="Goffeau A."/>
            <person name="Cadieu E."/>
            <person name="Dreano S."/>
            <person name="Gloux S."/>
            <person name="Lelaure V."/>
            <person name="Mottier S."/>
            <person name="Galibert F."/>
            <person name="Aves S.J."/>
            <person name="Xiang Z."/>
            <person name="Hunt C."/>
            <person name="Moore K."/>
            <person name="Hurst S.M."/>
            <person name="Lucas M."/>
            <person name="Rochet M."/>
            <person name="Gaillardin C."/>
            <person name="Tallada V.A."/>
            <person name="Garzon A."/>
            <person name="Thode G."/>
            <person name="Daga R.R."/>
            <person name="Cruzado L."/>
            <person name="Jimenez J."/>
            <person name="Sanchez M."/>
            <person name="del Rey F."/>
            <person name="Benito J."/>
            <person name="Dominguez A."/>
            <person name="Revuelta J.L."/>
            <person name="Moreno S."/>
            <person name="Armstrong J."/>
            <person name="Forsburg S.L."/>
            <person name="Cerutti L."/>
            <person name="Lowe T."/>
            <person name="McCombie W.R."/>
            <person name="Paulsen I."/>
            <person name="Potashkin J."/>
            <person name="Shpakovski G.V."/>
            <person name="Ussery D."/>
            <person name="Barrell B.G."/>
            <person name="Nurse P."/>
        </authorList>
    </citation>
    <scope>NUCLEOTIDE SEQUENCE [LARGE SCALE GENOMIC DNA]</scope>
    <source>
        <strain>972 / ATCC 24843</strain>
    </source>
</reference>
<reference key="2">
    <citation type="journal article" date="2006" name="Nat. Biotechnol.">
        <title>ORFeome cloning and global analysis of protein localization in the fission yeast Schizosaccharomyces pombe.</title>
        <authorList>
            <person name="Matsuyama A."/>
            <person name="Arai R."/>
            <person name="Yashiroda Y."/>
            <person name="Shirai A."/>
            <person name="Kamata A."/>
            <person name="Sekido S."/>
            <person name="Kobayashi Y."/>
            <person name="Hashimoto A."/>
            <person name="Hamamoto M."/>
            <person name="Hiraoka Y."/>
            <person name="Horinouchi S."/>
            <person name="Yoshida M."/>
        </authorList>
    </citation>
    <scope>SUBCELLULAR LOCATION [LARGE SCALE ANALYSIS]</scope>
</reference>
<accession>Q10309</accession>